<sequence>MEIRADEISRIIREQIKDYGKKVEVAETGSILSQADGVARIYGLAGAAAGELLEFPGGIRGLVLNLEEDNVGAAIMGPYEHIREGDPVKRTGLIAEVPVGEELLGRVVDGLGNPIDGRGPLNAKHHRKIEIKAPGIVKRKSVHEPMQTGLKAIDALVPIGRGQRELILGDRQTGKTAVAIDTILNNKGNNLYCFYVAIGQKQSTVARVVDTLKKYGAMEYTTVISASASDPAPMQYLAPYTGVTMAEYFRDSGRHALIIYDDLSKQAVAYRQLSLLLRRPPGREAYPGDVFYLHSRLLERAAKLSDKEGAGSLTALPIIETQAGDVSAYIPTNVISITDGQIFLESNLFYQGVRPAINVGISVSRVGGSAQIKAMKQVAGSLKLDLAQYRELAAFAQFGSDLDKATQETLARGERLVELLKQGQYAPLSVEKQVIQIYAGTQKDTDGQNWIRAVPTEQVVRYMRELIEFLDARHPGIAKAIAEKKALDDGIRKDLDAALREFAGIFKIEG</sequence>
<name>ATPA_ANAD2</name>
<keyword id="KW-0066">ATP synthesis</keyword>
<keyword id="KW-0067">ATP-binding</keyword>
<keyword id="KW-0997">Cell inner membrane</keyword>
<keyword id="KW-1003">Cell membrane</keyword>
<keyword id="KW-0139">CF(1)</keyword>
<keyword id="KW-0375">Hydrogen ion transport</keyword>
<keyword id="KW-0406">Ion transport</keyword>
<keyword id="KW-0472">Membrane</keyword>
<keyword id="KW-0547">Nucleotide-binding</keyword>
<keyword id="KW-1278">Translocase</keyword>
<keyword id="KW-0813">Transport</keyword>
<accession>B8JCV2</accession>
<dbReference type="EC" id="7.1.2.2" evidence="1"/>
<dbReference type="EMBL" id="CP001359">
    <property type="protein sequence ID" value="ACL67822.1"/>
    <property type="molecule type" value="Genomic_DNA"/>
</dbReference>
<dbReference type="RefSeq" id="WP_015935499.1">
    <property type="nucleotide sequence ID" value="NC_011891.1"/>
</dbReference>
<dbReference type="SMR" id="B8JCV2"/>
<dbReference type="KEGG" id="acp:A2cp1_4505"/>
<dbReference type="HOGENOM" id="CLU_010091_2_1_7"/>
<dbReference type="Proteomes" id="UP000007089">
    <property type="component" value="Chromosome"/>
</dbReference>
<dbReference type="GO" id="GO:0005886">
    <property type="term" value="C:plasma membrane"/>
    <property type="evidence" value="ECO:0007669"/>
    <property type="project" value="UniProtKB-SubCell"/>
</dbReference>
<dbReference type="GO" id="GO:0045259">
    <property type="term" value="C:proton-transporting ATP synthase complex"/>
    <property type="evidence" value="ECO:0007669"/>
    <property type="project" value="UniProtKB-KW"/>
</dbReference>
<dbReference type="GO" id="GO:0043531">
    <property type="term" value="F:ADP binding"/>
    <property type="evidence" value="ECO:0007669"/>
    <property type="project" value="TreeGrafter"/>
</dbReference>
<dbReference type="GO" id="GO:0005524">
    <property type="term" value="F:ATP binding"/>
    <property type="evidence" value="ECO:0007669"/>
    <property type="project" value="UniProtKB-UniRule"/>
</dbReference>
<dbReference type="GO" id="GO:0046933">
    <property type="term" value="F:proton-transporting ATP synthase activity, rotational mechanism"/>
    <property type="evidence" value="ECO:0007669"/>
    <property type="project" value="UniProtKB-UniRule"/>
</dbReference>
<dbReference type="CDD" id="cd18113">
    <property type="entry name" value="ATP-synt_F1_alpha_C"/>
    <property type="match status" value="1"/>
</dbReference>
<dbReference type="CDD" id="cd18116">
    <property type="entry name" value="ATP-synt_F1_alpha_N"/>
    <property type="match status" value="1"/>
</dbReference>
<dbReference type="CDD" id="cd01132">
    <property type="entry name" value="F1-ATPase_alpha_CD"/>
    <property type="match status" value="1"/>
</dbReference>
<dbReference type="FunFam" id="1.20.150.20:FF:000001">
    <property type="entry name" value="ATP synthase subunit alpha"/>
    <property type="match status" value="1"/>
</dbReference>
<dbReference type="FunFam" id="2.40.30.20:FF:000001">
    <property type="entry name" value="ATP synthase subunit alpha"/>
    <property type="match status" value="1"/>
</dbReference>
<dbReference type="FunFam" id="3.40.50.300:FF:000002">
    <property type="entry name" value="ATP synthase subunit alpha"/>
    <property type="match status" value="1"/>
</dbReference>
<dbReference type="Gene3D" id="2.40.30.20">
    <property type="match status" value="1"/>
</dbReference>
<dbReference type="Gene3D" id="1.20.150.20">
    <property type="entry name" value="ATP synthase alpha/beta chain, C-terminal domain"/>
    <property type="match status" value="1"/>
</dbReference>
<dbReference type="Gene3D" id="3.40.50.300">
    <property type="entry name" value="P-loop containing nucleotide triphosphate hydrolases"/>
    <property type="match status" value="1"/>
</dbReference>
<dbReference type="HAMAP" id="MF_01346">
    <property type="entry name" value="ATP_synth_alpha_bact"/>
    <property type="match status" value="1"/>
</dbReference>
<dbReference type="InterPro" id="IPR023366">
    <property type="entry name" value="ATP_synth_asu-like_sf"/>
</dbReference>
<dbReference type="InterPro" id="IPR000793">
    <property type="entry name" value="ATP_synth_asu_C"/>
</dbReference>
<dbReference type="InterPro" id="IPR038376">
    <property type="entry name" value="ATP_synth_asu_C_sf"/>
</dbReference>
<dbReference type="InterPro" id="IPR033732">
    <property type="entry name" value="ATP_synth_F1_a_nt-bd_dom"/>
</dbReference>
<dbReference type="InterPro" id="IPR005294">
    <property type="entry name" value="ATP_synth_F1_asu"/>
</dbReference>
<dbReference type="InterPro" id="IPR020003">
    <property type="entry name" value="ATPase_a/bsu_AS"/>
</dbReference>
<dbReference type="InterPro" id="IPR004100">
    <property type="entry name" value="ATPase_F1/V1/A1_a/bsu_N"/>
</dbReference>
<dbReference type="InterPro" id="IPR036121">
    <property type="entry name" value="ATPase_F1/V1/A1_a/bsu_N_sf"/>
</dbReference>
<dbReference type="InterPro" id="IPR000194">
    <property type="entry name" value="ATPase_F1/V1/A1_a/bsu_nucl-bd"/>
</dbReference>
<dbReference type="InterPro" id="IPR027417">
    <property type="entry name" value="P-loop_NTPase"/>
</dbReference>
<dbReference type="NCBIfam" id="TIGR00962">
    <property type="entry name" value="atpA"/>
    <property type="match status" value="1"/>
</dbReference>
<dbReference type="NCBIfam" id="NF009884">
    <property type="entry name" value="PRK13343.1"/>
    <property type="match status" value="1"/>
</dbReference>
<dbReference type="PANTHER" id="PTHR48082">
    <property type="entry name" value="ATP SYNTHASE SUBUNIT ALPHA, MITOCHONDRIAL"/>
    <property type="match status" value="1"/>
</dbReference>
<dbReference type="PANTHER" id="PTHR48082:SF2">
    <property type="entry name" value="ATP SYNTHASE SUBUNIT ALPHA, MITOCHONDRIAL"/>
    <property type="match status" value="1"/>
</dbReference>
<dbReference type="Pfam" id="PF00006">
    <property type="entry name" value="ATP-synt_ab"/>
    <property type="match status" value="1"/>
</dbReference>
<dbReference type="Pfam" id="PF00306">
    <property type="entry name" value="ATP-synt_ab_C"/>
    <property type="match status" value="1"/>
</dbReference>
<dbReference type="Pfam" id="PF02874">
    <property type="entry name" value="ATP-synt_ab_N"/>
    <property type="match status" value="1"/>
</dbReference>
<dbReference type="PIRSF" id="PIRSF039088">
    <property type="entry name" value="F_ATPase_subunit_alpha"/>
    <property type="match status" value="1"/>
</dbReference>
<dbReference type="SUPFAM" id="SSF47917">
    <property type="entry name" value="C-terminal domain of alpha and beta subunits of F1 ATP synthase"/>
    <property type="match status" value="1"/>
</dbReference>
<dbReference type="SUPFAM" id="SSF50615">
    <property type="entry name" value="N-terminal domain of alpha and beta subunits of F1 ATP synthase"/>
    <property type="match status" value="1"/>
</dbReference>
<dbReference type="SUPFAM" id="SSF52540">
    <property type="entry name" value="P-loop containing nucleoside triphosphate hydrolases"/>
    <property type="match status" value="1"/>
</dbReference>
<dbReference type="PROSITE" id="PS00152">
    <property type="entry name" value="ATPASE_ALPHA_BETA"/>
    <property type="match status" value="1"/>
</dbReference>
<feature type="chain" id="PRO_1000166512" description="ATP synthase subunit alpha">
    <location>
        <begin position="1"/>
        <end position="510"/>
    </location>
</feature>
<feature type="binding site" evidence="1">
    <location>
        <begin position="169"/>
        <end position="176"/>
    </location>
    <ligand>
        <name>ATP</name>
        <dbReference type="ChEBI" id="CHEBI:30616"/>
    </ligand>
</feature>
<feature type="site" description="Required for activity" evidence="1">
    <location>
        <position position="362"/>
    </location>
</feature>
<proteinExistence type="inferred from homology"/>
<evidence type="ECO:0000255" key="1">
    <source>
        <dbReference type="HAMAP-Rule" id="MF_01346"/>
    </source>
</evidence>
<protein>
    <recommendedName>
        <fullName evidence="1">ATP synthase subunit alpha</fullName>
        <ecNumber evidence="1">7.1.2.2</ecNumber>
    </recommendedName>
    <alternativeName>
        <fullName evidence="1">ATP synthase F1 sector subunit alpha</fullName>
    </alternativeName>
    <alternativeName>
        <fullName evidence="1">F-ATPase subunit alpha</fullName>
    </alternativeName>
</protein>
<organism>
    <name type="scientific">Anaeromyxobacter dehalogenans (strain 2CP-1 / ATCC BAA-258)</name>
    <dbReference type="NCBI Taxonomy" id="455488"/>
    <lineage>
        <taxon>Bacteria</taxon>
        <taxon>Pseudomonadati</taxon>
        <taxon>Myxococcota</taxon>
        <taxon>Myxococcia</taxon>
        <taxon>Myxococcales</taxon>
        <taxon>Cystobacterineae</taxon>
        <taxon>Anaeromyxobacteraceae</taxon>
        <taxon>Anaeromyxobacter</taxon>
    </lineage>
</organism>
<reference key="1">
    <citation type="submission" date="2009-01" db="EMBL/GenBank/DDBJ databases">
        <title>Complete sequence of Anaeromyxobacter dehalogenans 2CP-1.</title>
        <authorList>
            <person name="Lucas S."/>
            <person name="Copeland A."/>
            <person name="Lapidus A."/>
            <person name="Glavina del Rio T."/>
            <person name="Dalin E."/>
            <person name="Tice H."/>
            <person name="Bruce D."/>
            <person name="Goodwin L."/>
            <person name="Pitluck S."/>
            <person name="Saunders E."/>
            <person name="Brettin T."/>
            <person name="Detter J.C."/>
            <person name="Han C."/>
            <person name="Larimer F."/>
            <person name="Land M."/>
            <person name="Hauser L."/>
            <person name="Kyrpides N."/>
            <person name="Ovchinnikova G."/>
            <person name="Beliaev A.S."/>
            <person name="Richardson P."/>
        </authorList>
    </citation>
    <scope>NUCLEOTIDE SEQUENCE [LARGE SCALE GENOMIC DNA]</scope>
    <source>
        <strain>2CP-1 / ATCC BAA-258</strain>
    </source>
</reference>
<gene>
    <name evidence="1" type="primary">atpA</name>
    <name type="ordered locus">A2cp1_4505</name>
</gene>
<comment type="function">
    <text evidence="1">Produces ATP from ADP in the presence of a proton gradient across the membrane. The alpha chain is a regulatory subunit.</text>
</comment>
<comment type="catalytic activity">
    <reaction evidence="1">
        <text>ATP + H2O + 4 H(+)(in) = ADP + phosphate + 5 H(+)(out)</text>
        <dbReference type="Rhea" id="RHEA:57720"/>
        <dbReference type="ChEBI" id="CHEBI:15377"/>
        <dbReference type="ChEBI" id="CHEBI:15378"/>
        <dbReference type="ChEBI" id="CHEBI:30616"/>
        <dbReference type="ChEBI" id="CHEBI:43474"/>
        <dbReference type="ChEBI" id="CHEBI:456216"/>
        <dbReference type="EC" id="7.1.2.2"/>
    </reaction>
</comment>
<comment type="subunit">
    <text evidence="1">F-type ATPases have 2 components, CF(1) - the catalytic core - and CF(0) - the membrane proton channel. CF(1) has five subunits: alpha(3), beta(3), gamma(1), delta(1), epsilon(1). CF(0) has three main subunits: a(1), b(2) and c(9-12). The alpha and beta chains form an alternating ring which encloses part of the gamma chain. CF(1) is attached to CF(0) by a central stalk formed by the gamma and epsilon chains, while a peripheral stalk is formed by the delta and b chains.</text>
</comment>
<comment type="subcellular location">
    <subcellularLocation>
        <location evidence="1">Cell inner membrane</location>
        <topology evidence="1">Peripheral membrane protein</topology>
    </subcellularLocation>
</comment>
<comment type="similarity">
    <text evidence="1">Belongs to the ATPase alpha/beta chains family.</text>
</comment>